<evidence type="ECO:0000250" key="1"/>
<evidence type="ECO:0000250" key="2">
    <source>
        <dbReference type="UniProtKB" id="P00157"/>
    </source>
</evidence>
<evidence type="ECO:0000255" key="3">
    <source>
        <dbReference type="PROSITE-ProRule" id="PRU00967"/>
    </source>
</evidence>
<evidence type="ECO:0000255" key="4">
    <source>
        <dbReference type="PROSITE-ProRule" id="PRU00968"/>
    </source>
</evidence>
<accession>Q9T4P2</accession>
<feature type="chain" id="PRO_0000061593" description="Cytochrome b">
    <location>
        <begin position="1"/>
        <end position="379"/>
    </location>
</feature>
<feature type="transmembrane region" description="Helical" evidence="2">
    <location>
        <begin position="33"/>
        <end position="53"/>
    </location>
</feature>
<feature type="transmembrane region" description="Helical" evidence="2">
    <location>
        <begin position="77"/>
        <end position="98"/>
    </location>
</feature>
<feature type="transmembrane region" description="Helical" evidence="2">
    <location>
        <begin position="113"/>
        <end position="133"/>
    </location>
</feature>
<feature type="transmembrane region" description="Helical" evidence="2">
    <location>
        <begin position="178"/>
        <end position="198"/>
    </location>
</feature>
<feature type="transmembrane region" description="Helical" evidence="2">
    <location>
        <begin position="226"/>
        <end position="246"/>
    </location>
</feature>
<feature type="transmembrane region" description="Helical" evidence="2">
    <location>
        <begin position="288"/>
        <end position="308"/>
    </location>
</feature>
<feature type="transmembrane region" description="Helical" evidence="2">
    <location>
        <begin position="320"/>
        <end position="340"/>
    </location>
</feature>
<feature type="transmembrane region" description="Helical" evidence="2">
    <location>
        <begin position="347"/>
        <end position="367"/>
    </location>
</feature>
<feature type="binding site" description="axial binding residue" evidence="2">
    <location>
        <position position="83"/>
    </location>
    <ligand>
        <name>heme b</name>
        <dbReference type="ChEBI" id="CHEBI:60344"/>
        <label>b562</label>
    </ligand>
    <ligandPart>
        <name>Fe</name>
        <dbReference type="ChEBI" id="CHEBI:18248"/>
    </ligandPart>
</feature>
<feature type="binding site" description="axial binding residue" evidence="2">
    <location>
        <position position="97"/>
    </location>
    <ligand>
        <name>heme b</name>
        <dbReference type="ChEBI" id="CHEBI:60344"/>
        <label>b566</label>
    </ligand>
    <ligandPart>
        <name>Fe</name>
        <dbReference type="ChEBI" id="CHEBI:18248"/>
    </ligandPart>
</feature>
<feature type="binding site" description="axial binding residue" evidence="2">
    <location>
        <position position="182"/>
    </location>
    <ligand>
        <name>heme b</name>
        <dbReference type="ChEBI" id="CHEBI:60344"/>
        <label>b562</label>
    </ligand>
    <ligandPart>
        <name>Fe</name>
        <dbReference type="ChEBI" id="CHEBI:18248"/>
    </ligandPart>
</feature>
<feature type="binding site" description="axial binding residue" evidence="2">
    <location>
        <position position="196"/>
    </location>
    <ligand>
        <name>heme b</name>
        <dbReference type="ChEBI" id="CHEBI:60344"/>
        <label>b566</label>
    </ligand>
    <ligandPart>
        <name>Fe</name>
        <dbReference type="ChEBI" id="CHEBI:18248"/>
    </ligandPart>
</feature>
<feature type="binding site" evidence="2">
    <location>
        <position position="201"/>
    </location>
    <ligand>
        <name>a ubiquinone</name>
        <dbReference type="ChEBI" id="CHEBI:16389"/>
    </ligand>
</feature>
<dbReference type="EMBL" id="AF157858">
    <property type="protein sequence ID" value="AAD50142.1"/>
    <property type="molecule type" value="Genomic_DNA"/>
</dbReference>
<dbReference type="EMBL" id="AF157859">
    <property type="protein sequence ID" value="AAD50143.1"/>
    <property type="molecule type" value="Genomic_DNA"/>
</dbReference>
<dbReference type="GO" id="GO:0005743">
    <property type="term" value="C:mitochondrial inner membrane"/>
    <property type="evidence" value="ECO:0007669"/>
    <property type="project" value="UniProtKB-SubCell"/>
</dbReference>
<dbReference type="GO" id="GO:0045275">
    <property type="term" value="C:respiratory chain complex III"/>
    <property type="evidence" value="ECO:0007669"/>
    <property type="project" value="InterPro"/>
</dbReference>
<dbReference type="GO" id="GO:0046872">
    <property type="term" value="F:metal ion binding"/>
    <property type="evidence" value="ECO:0007669"/>
    <property type="project" value="UniProtKB-KW"/>
</dbReference>
<dbReference type="GO" id="GO:0008121">
    <property type="term" value="F:ubiquinol-cytochrome-c reductase activity"/>
    <property type="evidence" value="ECO:0007669"/>
    <property type="project" value="InterPro"/>
</dbReference>
<dbReference type="GO" id="GO:0006122">
    <property type="term" value="P:mitochondrial electron transport, ubiquinol to cytochrome c"/>
    <property type="evidence" value="ECO:0007669"/>
    <property type="project" value="TreeGrafter"/>
</dbReference>
<dbReference type="CDD" id="cd00290">
    <property type="entry name" value="cytochrome_b_C"/>
    <property type="match status" value="1"/>
</dbReference>
<dbReference type="CDD" id="cd00284">
    <property type="entry name" value="Cytochrome_b_N"/>
    <property type="match status" value="1"/>
</dbReference>
<dbReference type="FunFam" id="1.20.810.10:FF:000002">
    <property type="entry name" value="Cytochrome b"/>
    <property type="match status" value="1"/>
</dbReference>
<dbReference type="Gene3D" id="1.20.810.10">
    <property type="entry name" value="Cytochrome Bc1 Complex, Chain C"/>
    <property type="match status" value="1"/>
</dbReference>
<dbReference type="InterPro" id="IPR005798">
    <property type="entry name" value="Cyt_b/b6_C"/>
</dbReference>
<dbReference type="InterPro" id="IPR036150">
    <property type="entry name" value="Cyt_b/b6_C_sf"/>
</dbReference>
<dbReference type="InterPro" id="IPR005797">
    <property type="entry name" value="Cyt_b/b6_N"/>
</dbReference>
<dbReference type="InterPro" id="IPR027387">
    <property type="entry name" value="Cytb/b6-like_sf"/>
</dbReference>
<dbReference type="InterPro" id="IPR030689">
    <property type="entry name" value="Cytochrome_b"/>
</dbReference>
<dbReference type="InterPro" id="IPR048260">
    <property type="entry name" value="Cytochrome_b_C_euk/bac"/>
</dbReference>
<dbReference type="InterPro" id="IPR048259">
    <property type="entry name" value="Cytochrome_b_N_euk/bac"/>
</dbReference>
<dbReference type="InterPro" id="IPR016174">
    <property type="entry name" value="Di-haem_cyt_TM"/>
</dbReference>
<dbReference type="PANTHER" id="PTHR19271">
    <property type="entry name" value="CYTOCHROME B"/>
    <property type="match status" value="1"/>
</dbReference>
<dbReference type="PANTHER" id="PTHR19271:SF16">
    <property type="entry name" value="CYTOCHROME B"/>
    <property type="match status" value="1"/>
</dbReference>
<dbReference type="Pfam" id="PF00032">
    <property type="entry name" value="Cytochrom_B_C"/>
    <property type="match status" value="1"/>
</dbReference>
<dbReference type="Pfam" id="PF00033">
    <property type="entry name" value="Cytochrome_B"/>
    <property type="match status" value="1"/>
</dbReference>
<dbReference type="PIRSF" id="PIRSF038885">
    <property type="entry name" value="COB"/>
    <property type="match status" value="1"/>
</dbReference>
<dbReference type="SUPFAM" id="SSF81648">
    <property type="entry name" value="a domain/subunit of cytochrome bc1 complex (Ubiquinol-cytochrome c reductase)"/>
    <property type="match status" value="1"/>
</dbReference>
<dbReference type="SUPFAM" id="SSF81342">
    <property type="entry name" value="Transmembrane di-heme cytochromes"/>
    <property type="match status" value="1"/>
</dbReference>
<dbReference type="PROSITE" id="PS51003">
    <property type="entry name" value="CYTB_CTER"/>
    <property type="match status" value="1"/>
</dbReference>
<dbReference type="PROSITE" id="PS51002">
    <property type="entry name" value="CYTB_NTER"/>
    <property type="match status" value="1"/>
</dbReference>
<proteinExistence type="inferred from homology"/>
<sequence>MTNTRKTHPLXKIINHSFIDLPAPSNISAWWNFGSLLGLCLIIQILTGLFLAMHYTSDTMTAFSSVTHICRDVNYGWLIRYMHANGASMFFICLFLHVGRGLYYGSYTYFETWNIGIILLFTVMATAFMGYVLPWGQMSFWGATVITNLLSAIPYIGTTLVEWIWGGFSVDKATLTRFFAFHFILPFIITALVMIHLLFLHETGSNNPSGLISDSDKIPFHPYYTIKDILGILLLILTLMMLVLFSPDLLGDPDNYMPANPLSTPPHIKPEWYFLFAYAILRSIPNKLGGVLALIFSILILMLFPLLHLSKQRSMMFRPMSQCVFWILVADLLTLTWIGGQPVEHPFVIIGQLASILYFAIILLILPTVSMIENKLLKW</sequence>
<keyword id="KW-0249">Electron transport</keyword>
<keyword id="KW-0349">Heme</keyword>
<keyword id="KW-0408">Iron</keyword>
<keyword id="KW-0472">Membrane</keyword>
<keyword id="KW-0479">Metal-binding</keyword>
<keyword id="KW-0496">Mitochondrion</keyword>
<keyword id="KW-0999">Mitochondrion inner membrane</keyword>
<keyword id="KW-0679">Respiratory chain</keyword>
<keyword id="KW-0812">Transmembrane</keyword>
<keyword id="KW-1133">Transmembrane helix</keyword>
<keyword id="KW-0813">Transport</keyword>
<keyword id="KW-0830">Ubiquinone</keyword>
<name>CYB_SPECI</name>
<organism>
    <name type="scientific">Spermophilus citellus</name>
    <name type="common">European ground squirrel</name>
    <name type="synonym">Citellus citellus</name>
    <dbReference type="NCBI Taxonomy" id="9997"/>
    <lineage>
        <taxon>Eukaryota</taxon>
        <taxon>Metazoa</taxon>
        <taxon>Chordata</taxon>
        <taxon>Craniata</taxon>
        <taxon>Vertebrata</taxon>
        <taxon>Euteleostomi</taxon>
        <taxon>Mammalia</taxon>
        <taxon>Eutheria</taxon>
        <taxon>Euarchontoglires</taxon>
        <taxon>Glires</taxon>
        <taxon>Rodentia</taxon>
        <taxon>Sciuromorpha</taxon>
        <taxon>Sciuridae</taxon>
        <taxon>Xerinae</taxon>
        <taxon>Marmotini</taxon>
        <taxon>Spermophilus</taxon>
    </lineage>
</organism>
<reference key="1">
    <citation type="submission" date="1999-06" db="EMBL/GenBank/DDBJ databases">
        <title>A molecular phylogeny of ground squirrels and prairie dogs.</title>
        <authorList>
            <person name="Harrison R.G."/>
            <person name="Sherman P.W."/>
            <person name="Yensen E."/>
            <person name="Hoffmann R.S."/>
            <person name="Bogdanowicz S.M."/>
        </authorList>
    </citation>
    <scope>NUCLEOTIDE SEQUENCE [GENOMIC DNA]</scope>
    <source>
        <strain>Isolate S117</strain>
        <strain>Isolate S118</strain>
    </source>
</reference>
<comment type="function">
    <text evidence="2">Component of the ubiquinol-cytochrome c reductase complex (complex III or cytochrome b-c1 complex) that is part of the mitochondrial respiratory chain. The b-c1 complex mediates electron transfer from ubiquinol to cytochrome c. Contributes to the generation of a proton gradient across the mitochondrial membrane that is then used for ATP synthesis.</text>
</comment>
<comment type="cofactor">
    <cofactor evidence="2">
        <name>heme b</name>
        <dbReference type="ChEBI" id="CHEBI:60344"/>
    </cofactor>
    <text evidence="2">Binds 2 heme b groups non-covalently.</text>
</comment>
<comment type="subunit">
    <text evidence="2">The cytochrome bc1 complex contains 11 subunits: 3 respiratory subunits (MT-CYB, CYC1 and UQCRFS1), 2 core proteins (UQCRC1 and UQCRC2) and 6 low-molecular weight proteins (UQCRH/QCR6, UQCRB/QCR7, UQCRQ/QCR8, UQCR10/QCR9, UQCR11/QCR10 and a cleavage product of UQCRFS1). This cytochrome bc1 complex then forms a dimer.</text>
</comment>
<comment type="subcellular location">
    <subcellularLocation>
        <location evidence="2">Mitochondrion inner membrane</location>
        <topology evidence="2">Multi-pass membrane protein</topology>
    </subcellularLocation>
</comment>
<comment type="miscellaneous">
    <text evidence="1">Heme 1 (or BL or b562) is low-potential and absorbs at about 562 nm, and heme 2 (or BH or b566) is high-potential and absorbs at about 566 nm.</text>
</comment>
<comment type="similarity">
    <text evidence="3 4">Belongs to the cytochrome b family.</text>
</comment>
<comment type="caution">
    <text evidence="2">The full-length protein contains only eight transmembrane helices, not nine as predicted by bioinformatics tools.</text>
</comment>
<protein>
    <recommendedName>
        <fullName>Cytochrome b</fullName>
    </recommendedName>
    <alternativeName>
        <fullName>Complex III subunit 3</fullName>
    </alternativeName>
    <alternativeName>
        <fullName>Complex III subunit III</fullName>
    </alternativeName>
    <alternativeName>
        <fullName>Cytochrome b-c1 complex subunit 3</fullName>
    </alternativeName>
    <alternativeName>
        <fullName>Ubiquinol-cytochrome-c reductase complex cytochrome b subunit</fullName>
    </alternativeName>
</protein>
<gene>
    <name type="primary">MT-CYB</name>
    <name type="synonym">COB</name>
    <name type="synonym">CYTB</name>
    <name type="synonym">MTCYB</name>
</gene>
<geneLocation type="mitochondrion"/>